<sequence length="292" mass="31155">MQHLIDKANTLMEALPYIRRFSGKTIVIKYGGHAMADEALKESFALDVIMLKSLGINPVVVHGGGPQINETLKRYGIVSEFVKGMRVTDAATMQVVEMVLTGQVNKEVVGYLNQHGGRAVGLSGKDGNLLLCRKLLQEVRQDDGTVESVDIGFVGDVVKVNQELIQTLEHGKFIPVIAPVGVGEQGESYNVNADLVAGRVAGALRAEKLILLTDVAGVKDKAGALLSSIRLDTVPGLIDDGVITGGMIPKVTCCVDAIEEGVRKASIIDGRVLHAVLLEIFTDVGVGTEIHR</sequence>
<evidence type="ECO:0000255" key="1">
    <source>
        <dbReference type="HAMAP-Rule" id="MF_00082"/>
    </source>
</evidence>
<accession>Q74GU4</accession>
<keyword id="KW-0028">Amino-acid biosynthesis</keyword>
<keyword id="KW-0055">Arginine biosynthesis</keyword>
<keyword id="KW-0067">ATP-binding</keyword>
<keyword id="KW-0963">Cytoplasm</keyword>
<keyword id="KW-0418">Kinase</keyword>
<keyword id="KW-0547">Nucleotide-binding</keyword>
<keyword id="KW-1185">Reference proteome</keyword>
<keyword id="KW-0808">Transferase</keyword>
<protein>
    <recommendedName>
        <fullName evidence="1">Acetylglutamate kinase</fullName>
        <ecNumber evidence="1">2.7.2.8</ecNumber>
    </recommendedName>
    <alternativeName>
        <fullName evidence="1">N-acetyl-L-glutamate 5-phosphotransferase</fullName>
    </alternativeName>
    <alternativeName>
        <fullName evidence="1">NAG kinase</fullName>
        <shortName evidence="1">NAGK</shortName>
    </alternativeName>
</protein>
<dbReference type="EC" id="2.7.2.8" evidence="1"/>
<dbReference type="EMBL" id="AE017180">
    <property type="protein sequence ID" value="AAR33485.1"/>
    <property type="molecule type" value="Genomic_DNA"/>
</dbReference>
<dbReference type="RefSeq" id="NP_951212.1">
    <property type="nucleotide sequence ID" value="NC_002939.5"/>
</dbReference>
<dbReference type="RefSeq" id="WP_010940826.1">
    <property type="nucleotide sequence ID" value="NC_002939.5"/>
</dbReference>
<dbReference type="SMR" id="Q74GU4"/>
<dbReference type="FunCoup" id="Q74GU4">
    <property type="interactions" value="354"/>
</dbReference>
<dbReference type="STRING" id="243231.GSU0150"/>
<dbReference type="EnsemblBacteria" id="AAR33485">
    <property type="protein sequence ID" value="AAR33485"/>
    <property type="gene ID" value="GSU0150"/>
</dbReference>
<dbReference type="KEGG" id="gsu:GSU0150"/>
<dbReference type="PATRIC" id="fig|243231.5.peg.151"/>
<dbReference type="eggNOG" id="COG0548">
    <property type="taxonomic scope" value="Bacteria"/>
</dbReference>
<dbReference type="HOGENOM" id="CLU_053680_0_0_7"/>
<dbReference type="InParanoid" id="Q74GU4"/>
<dbReference type="OrthoDB" id="9803155at2"/>
<dbReference type="UniPathway" id="UPA00068">
    <property type="reaction ID" value="UER00107"/>
</dbReference>
<dbReference type="Proteomes" id="UP000000577">
    <property type="component" value="Chromosome"/>
</dbReference>
<dbReference type="GO" id="GO:0005737">
    <property type="term" value="C:cytoplasm"/>
    <property type="evidence" value="ECO:0007669"/>
    <property type="project" value="UniProtKB-SubCell"/>
</dbReference>
<dbReference type="GO" id="GO:0003991">
    <property type="term" value="F:acetylglutamate kinase activity"/>
    <property type="evidence" value="ECO:0000318"/>
    <property type="project" value="GO_Central"/>
</dbReference>
<dbReference type="GO" id="GO:0005524">
    <property type="term" value="F:ATP binding"/>
    <property type="evidence" value="ECO:0007669"/>
    <property type="project" value="UniProtKB-UniRule"/>
</dbReference>
<dbReference type="GO" id="GO:0042450">
    <property type="term" value="P:arginine biosynthetic process via ornithine"/>
    <property type="evidence" value="ECO:0007669"/>
    <property type="project" value="UniProtKB-UniRule"/>
</dbReference>
<dbReference type="GO" id="GO:0006526">
    <property type="term" value="P:L-arginine biosynthetic process"/>
    <property type="evidence" value="ECO:0000318"/>
    <property type="project" value="GO_Central"/>
</dbReference>
<dbReference type="CDD" id="cd04250">
    <property type="entry name" value="AAK_NAGK-C"/>
    <property type="match status" value="1"/>
</dbReference>
<dbReference type="FunFam" id="3.40.1160.10:FF:000004">
    <property type="entry name" value="Acetylglutamate kinase"/>
    <property type="match status" value="1"/>
</dbReference>
<dbReference type="Gene3D" id="3.40.1160.10">
    <property type="entry name" value="Acetylglutamate kinase-like"/>
    <property type="match status" value="1"/>
</dbReference>
<dbReference type="HAMAP" id="MF_00082">
    <property type="entry name" value="ArgB"/>
    <property type="match status" value="1"/>
</dbReference>
<dbReference type="InterPro" id="IPR036393">
    <property type="entry name" value="AceGlu_kinase-like_sf"/>
</dbReference>
<dbReference type="InterPro" id="IPR004662">
    <property type="entry name" value="AcgluKinase_fam"/>
</dbReference>
<dbReference type="InterPro" id="IPR037528">
    <property type="entry name" value="ArgB"/>
</dbReference>
<dbReference type="InterPro" id="IPR001048">
    <property type="entry name" value="Asp/Glu/Uridylate_kinase"/>
</dbReference>
<dbReference type="InterPro" id="IPR001057">
    <property type="entry name" value="Glu/AcGlu_kinase"/>
</dbReference>
<dbReference type="InterPro" id="IPR041727">
    <property type="entry name" value="NAGK-C"/>
</dbReference>
<dbReference type="NCBIfam" id="TIGR00761">
    <property type="entry name" value="argB"/>
    <property type="match status" value="1"/>
</dbReference>
<dbReference type="PANTHER" id="PTHR23342">
    <property type="entry name" value="N-ACETYLGLUTAMATE SYNTHASE"/>
    <property type="match status" value="1"/>
</dbReference>
<dbReference type="PANTHER" id="PTHR23342:SF0">
    <property type="entry name" value="N-ACETYLGLUTAMATE SYNTHASE, MITOCHONDRIAL"/>
    <property type="match status" value="1"/>
</dbReference>
<dbReference type="Pfam" id="PF00696">
    <property type="entry name" value="AA_kinase"/>
    <property type="match status" value="1"/>
</dbReference>
<dbReference type="PIRSF" id="PIRSF000728">
    <property type="entry name" value="NAGK"/>
    <property type="match status" value="1"/>
</dbReference>
<dbReference type="PRINTS" id="PR00474">
    <property type="entry name" value="GLU5KINASE"/>
</dbReference>
<dbReference type="SUPFAM" id="SSF53633">
    <property type="entry name" value="Carbamate kinase-like"/>
    <property type="match status" value="1"/>
</dbReference>
<organism>
    <name type="scientific">Geobacter sulfurreducens (strain ATCC 51573 / DSM 12127 / PCA)</name>
    <dbReference type="NCBI Taxonomy" id="243231"/>
    <lineage>
        <taxon>Bacteria</taxon>
        <taxon>Pseudomonadati</taxon>
        <taxon>Thermodesulfobacteriota</taxon>
        <taxon>Desulfuromonadia</taxon>
        <taxon>Geobacterales</taxon>
        <taxon>Geobacteraceae</taxon>
        <taxon>Geobacter</taxon>
    </lineage>
</organism>
<comment type="function">
    <text evidence="1">Catalyzes the ATP-dependent phosphorylation of N-acetyl-L-glutamate.</text>
</comment>
<comment type="catalytic activity">
    <reaction evidence="1">
        <text>N-acetyl-L-glutamate + ATP = N-acetyl-L-glutamyl 5-phosphate + ADP</text>
        <dbReference type="Rhea" id="RHEA:14629"/>
        <dbReference type="ChEBI" id="CHEBI:30616"/>
        <dbReference type="ChEBI" id="CHEBI:44337"/>
        <dbReference type="ChEBI" id="CHEBI:57936"/>
        <dbReference type="ChEBI" id="CHEBI:456216"/>
        <dbReference type="EC" id="2.7.2.8"/>
    </reaction>
</comment>
<comment type="pathway">
    <text evidence="1">Amino-acid biosynthesis; L-arginine biosynthesis; N(2)-acetyl-L-ornithine from L-glutamate: step 2/4.</text>
</comment>
<comment type="subcellular location">
    <subcellularLocation>
        <location evidence="1">Cytoplasm</location>
    </subcellularLocation>
</comment>
<comment type="similarity">
    <text evidence="1">Belongs to the acetylglutamate kinase family. ArgB subfamily.</text>
</comment>
<name>ARGB_GEOSL</name>
<reference key="1">
    <citation type="journal article" date="2003" name="Science">
        <title>Genome of Geobacter sulfurreducens: metal reduction in subsurface environments.</title>
        <authorList>
            <person name="Methe B.A."/>
            <person name="Nelson K.E."/>
            <person name="Eisen J.A."/>
            <person name="Paulsen I.T."/>
            <person name="Nelson W.C."/>
            <person name="Heidelberg J.F."/>
            <person name="Wu D."/>
            <person name="Wu M."/>
            <person name="Ward N.L."/>
            <person name="Beanan M.J."/>
            <person name="Dodson R.J."/>
            <person name="Madupu R."/>
            <person name="Brinkac L.M."/>
            <person name="Daugherty S.C."/>
            <person name="DeBoy R.T."/>
            <person name="Durkin A.S."/>
            <person name="Gwinn M.L."/>
            <person name="Kolonay J.F."/>
            <person name="Sullivan S.A."/>
            <person name="Haft D.H."/>
            <person name="Selengut J."/>
            <person name="Davidsen T.M."/>
            <person name="Zafar N."/>
            <person name="White O."/>
            <person name="Tran B."/>
            <person name="Romero C."/>
            <person name="Forberger H.A."/>
            <person name="Weidman J.F."/>
            <person name="Khouri H.M."/>
            <person name="Feldblyum T.V."/>
            <person name="Utterback T.R."/>
            <person name="Van Aken S.E."/>
            <person name="Lovley D.R."/>
            <person name="Fraser C.M."/>
        </authorList>
    </citation>
    <scope>NUCLEOTIDE SEQUENCE [LARGE SCALE GENOMIC DNA]</scope>
    <source>
        <strain>ATCC 51573 / DSM 12127 / PCA</strain>
    </source>
</reference>
<gene>
    <name evidence="1" type="primary">argB</name>
    <name type="ordered locus">GSU0150</name>
</gene>
<proteinExistence type="inferred from homology"/>
<feature type="chain" id="PRO_0000112618" description="Acetylglutamate kinase">
    <location>
        <begin position="1"/>
        <end position="292"/>
    </location>
</feature>
<feature type="binding site" evidence="1">
    <location>
        <begin position="64"/>
        <end position="65"/>
    </location>
    <ligand>
        <name>substrate</name>
    </ligand>
</feature>
<feature type="binding site" evidence="1">
    <location>
        <position position="86"/>
    </location>
    <ligand>
        <name>substrate</name>
    </ligand>
</feature>
<feature type="binding site" evidence="1">
    <location>
        <position position="190"/>
    </location>
    <ligand>
        <name>substrate</name>
    </ligand>
</feature>
<feature type="site" description="Transition state stabilizer" evidence="1">
    <location>
        <position position="29"/>
    </location>
</feature>
<feature type="site" description="Transition state stabilizer" evidence="1">
    <location>
        <position position="250"/>
    </location>
</feature>